<feature type="chain" id="PRO_1000014400" description="Methenyltetrahydromethanopterin cyclohydrolase">
    <location>
        <begin position="1"/>
        <end position="323"/>
    </location>
</feature>
<name>MCH_METM5</name>
<evidence type="ECO:0000255" key="1">
    <source>
        <dbReference type="HAMAP-Rule" id="MF_00486"/>
    </source>
</evidence>
<gene>
    <name evidence="1" type="primary">mch</name>
    <name type="ordered locus">MmarC5_0399</name>
</gene>
<accession>A4FWY5</accession>
<reference key="1">
    <citation type="submission" date="2007-03" db="EMBL/GenBank/DDBJ databases">
        <title>Complete sequence of chromosome of Methanococcus maripaludis C5.</title>
        <authorList>
            <consortium name="US DOE Joint Genome Institute"/>
            <person name="Copeland A."/>
            <person name="Lucas S."/>
            <person name="Lapidus A."/>
            <person name="Barry K."/>
            <person name="Glavina del Rio T."/>
            <person name="Dalin E."/>
            <person name="Tice H."/>
            <person name="Pitluck S."/>
            <person name="Chertkov O."/>
            <person name="Brettin T."/>
            <person name="Bruce D."/>
            <person name="Han C."/>
            <person name="Detter J.C."/>
            <person name="Schmutz J."/>
            <person name="Larimer F."/>
            <person name="Land M."/>
            <person name="Hauser L."/>
            <person name="Kyrpides N."/>
            <person name="Mikhailova N."/>
            <person name="Sieprawska-Lupa M."/>
            <person name="Whitman W.B."/>
            <person name="Richardson P."/>
        </authorList>
    </citation>
    <scope>NUCLEOTIDE SEQUENCE [LARGE SCALE GENOMIC DNA]</scope>
    <source>
        <strain>C5 / ATCC BAA-1333</strain>
    </source>
</reference>
<proteinExistence type="inferred from homology"/>
<keyword id="KW-0963">Cytoplasm</keyword>
<keyword id="KW-0378">Hydrolase</keyword>
<keyword id="KW-0484">Methanogenesis</keyword>
<keyword id="KW-0554">One-carbon metabolism</keyword>
<dbReference type="EC" id="3.5.4.27" evidence="1"/>
<dbReference type="EMBL" id="CP000609">
    <property type="protein sequence ID" value="ABO34714.1"/>
    <property type="molecule type" value="Genomic_DNA"/>
</dbReference>
<dbReference type="RefSeq" id="WP_011868169.1">
    <property type="nucleotide sequence ID" value="NC_009135.1"/>
</dbReference>
<dbReference type="SMR" id="A4FWY5"/>
<dbReference type="STRING" id="402880.MmarC5_0399"/>
<dbReference type="GeneID" id="4928850"/>
<dbReference type="KEGG" id="mmq:MmarC5_0399"/>
<dbReference type="eggNOG" id="arCOG02675">
    <property type="taxonomic scope" value="Archaea"/>
</dbReference>
<dbReference type="HOGENOM" id="CLU_876031_0_0_2"/>
<dbReference type="OrthoDB" id="105468at2157"/>
<dbReference type="UniPathway" id="UPA00640">
    <property type="reaction ID" value="UER00694"/>
</dbReference>
<dbReference type="Proteomes" id="UP000000253">
    <property type="component" value="Chromosome"/>
</dbReference>
<dbReference type="GO" id="GO:0005737">
    <property type="term" value="C:cytoplasm"/>
    <property type="evidence" value="ECO:0007669"/>
    <property type="project" value="UniProtKB-SubCell"/>
</dbReference>
<dbReference type="GO" id="GO:0018759">
    <property type="term" value="F:methenyltetrahydromethanopterin cyclohydrolase activity"/>
    <property type="evidence" value="ECO:0007669"/>
    <property type="project" value="UniProtKB-UniRule"/>
</dbReference>
<dbReference type="GO" id="GO:0019386">
    <property type="term" value="P:methanogenesis, from carbon dioxide"/>
    <property type="evidence" value="ECO:0007669"/>
    <property type="project" value="UniProtKB-UniRule"/>
</dbReference>
<dbReference type="GO" id="GO:0006730">
    <property type="term" value="P:one-carbon metabolic process"/>
    <property type="evidence" value="ECO:0007669"/>
    <property type="project" value="UniProtKB-UniRule"/>
</dbReference>
<dbReference type="CDD" id="cd00545">
    <property type="entry name" value="MCH"/>
    <property type="match status" value="1"/>
</dbReference>
<dbReference type="Gene3D" id="3.10.340.11">
    <property type="entry name" value="Methenyltetrahydromethanopterin Cyclohydrolase, Chain A, domain 1"/>
    <property type="match status" value="1"/>
</dbReference>
<dbReference type="Gene3D" id="3.30.1030.10">
    <property type="entry name" value="Methenyltetrahydromethanopterin Cyclohydrolase, Chain A, domain 2"/>
    <property type="match status" value="1"/>
</dbReference>
<dbReference type="HAMAP" id="MF_00486">
    <property type="entry name" value="McH"/>
    <property type="match status" value="1"/>
</dbReference>
<dbReference type="InterPro" id="IPR003209">
    <property type="entry name" value="METHMP_CycHdrlase"/>
</dbReference>
<dbReference type="NCBIfam" id="TIGR03120">
    <property type="entry name" value="one_C_mch"/>
    <property type="match status" value="1"/>
</dbReference>
<dbReference type="Pfam" id="PF02289">
    <property type="entry name" value="MCH"/>
    <property type="match status" value="1"/>
</dbReference>
<dbReference type="SUPFAM" id="SSF56199">
    <property type="entry name" value="Methenyltetrahydromethanopterin cyclohydrolase"/>
    <property type="match status" value="1"/>
</dbReference>
<comment type="function">
    <text evidence="1">Catalyzes the reversible interconversion of 5-formyl-H(4)MPT to methenyl-H(4)MPT(+).</text>
</comment>
<comment type="catalytic activity">
    <reaction evidence="1">
        <text>5,10-methenyl-5,6,7,8-tetrahydromethanopterin + H2O = N(5)-formyl-5,6,7,8-tetrahydromethanopterin + H(+)</text>
        <dbReference type="Rhea" id="RHEA:19053"/>
        <dbReference type="ChEBI" id="CHEBI:15377"/>
        <dbReference type="ChEBI" id="CHEBI:15378"/>
        <dbReference type="ChEBI" id="CHEBI:58018"/>
        <dbReference type="ChEBI" id="CHEBI:58337"/>
        <dbReference type="EC" id="3.5.4.27"/>
    </reaction>
</comment>
<comment type="pathway">
    <text evidence="1">One-carbon metabolism; methanogenesis from CO(2); 5,10-methenyl-5,6,7,8-tetrahydromethanopterin from CO(2): step 3/3.</text>
</comment>
<comment type="subcellular location">
    <subcellularLocation>
        <location evidence="1">Cytoplasm</location>
    </subcellularLocation>
</comment>
<comment type="similarity">
    <text evidence="1">Belongs to the MCH family.</text>
</comment>
<organism>
    <name type="scientific">Methanococcus maripaludis (strain C5 / ATCC BAA-1333)</name>
    <dbReference type="NCBI Taxonomy" id="402880"/>
    <lineage>
        <taxon>Archaea</taxon>
        <taxon>Methanobacteriati</taxon>
        <taxon>Methanobacteriota</taxon>
        <taxon>Methanomada group</taxon>
        <taxon>Methanococci</taxon>
        <taxon>Methanococcales</taxon>
        <taxon>Methanococcaceae</taxon>
        <taxon>Methanococcus</taxon>
    </lineage>
</organism>
<sequence>MISVNLASLPIVEDMINRKEDLNIEVIKLENGATVLDCGVNVMGSFEAGKLFTKICLGGLAHVGISISGSLDNKLVLPCVKIKTSHPAIATLGAQKAGWSVSVGKYFAMGSGPARALAMMPKATYEEIDYKDEADVAILCLESSQLPDENVADHVAEKCGVDVSKVYLLVAPTASMVGAVQISGRVVENGTYKMLEALHFDVRKVKFAAGIAPVAPVIGDDLKMMGATNDMVLYGGRTYYYVKSDEGDDIENLCKSLPSCSAETYGKPFLDVFKEANYDFYKIDKGIFAPAVVTINDLRTGKLMSYGETNVDVIKKSLKFSQL</sequence>
<protein>
    <recommendedName>
        <fullName evidence="1">Methenyltetrahydromethanopterin cyclohydrolase</fullName>
        <ecNumber evidence="1">3.5.4.27</ecNumber>
    </recommendedName>
    <alternativeName>
        <fullName evidence="1">Methenyl-H4MPT cyclohydrolase</fullName>
    </alternativeName>
</protein>